<feature type="chain" id="PRO_1000076464" description="Phosphoribosylaminoimidazole-succinocarboxamide synthase">
    <location>
        <begin position="1"/>
        <end position="249"/>
    </location>
</feature>
<comment type="catalytic activity">
    <reaction evidence="1">
        <text>5-amino-1-(5-phospho-D-ribosyl)imidazole-4-carboxylate + L-aspartate + ATP = (2S)-2-[5-amino-1-(5-phospho-beta-D-ribosyl)imidazole-4-carboxamido]succinate + ADP + phosphate + 2 H(+)</text>
        <dbReference type="Rhea" id="RHEA:22628"/>
        <dbReference type="ChEBI" id="CHEBI:15378"/>
        <dbReference type="ChEBI" id="CHEBI:29991"/>
        <dbReference type="ChEBI" id="CHEBI:30616"/>
        <dbReference type="ChEBI" id="CHEBI:43474"/>
        <dbReference type="ChEBI" id="CHEBI:58443"/>
        <dbReference type="ChEBI" id="CHEBI:77657"/>
        <dbReference type="ChEBI" id="CHEBI:456216"/>
        <dbReference type="EC" id="6.3.2.6"/>
    </reaction>
</comment>
<comment type="pathway">
    <text evidence="1">Purine metabolism; IMP biosynthesis via de novo pathway; 5-amino-1-(5-phospho-D-ribosyl)imidazole-4-carboxamide from 5-amino-1-(5-phospho-D-ribosyl)imidazole-4-carboxylate: step 1/2.</text>
</comment>
<comment type="similarity">
    <text evidence="1">Belongs to the SAICAR synthetase family.</text>
</comment>
<proteinExistence type="inferred from homology"/>
<keyword id="KW-0067">ATP-binding</keyword>
<keyword id="KW-0436">Ligase</keyword>
<keyword id="KW-0547">Nucleotide-binding</keyword>
<keyword id="KW-0658">Purine biosynthesis</keyword>
<keyword id="KW-1185">Reference proteome</keyword>
<sequence length="249" mass="27767">MNLGEKLTEGKTKIVYAHPNDPTLAIIIHKDGISAGDGARRHIIPGKGALSGRTTANVFTMLNHAGVATHFVAAPEPTVMIVRRCVMIPLEVVNRRIATGSYIRRHPDVAEGTRFDPPLLEFFLKDDARHDPQISPEEIVAQGIASADEVEQLASESRRVFLLIEEAWAAQDIVLCDLKIEFGRDASGALVVADVIDNDSWRIWPGGMKERMLDKQVYRNMPVVTDDGLEQVRRLYEEVAHRTDAWVNR</sequence>
<organism>
    <name type="scientific">Roseiflexus castenholzii (strain DSM 13941 / HLO8)</name>
    <dbReference type="NCBI Taxonomy" id="383372"/>
    <lineage>
        <taxon>Bacteria</taxon>
        <taxon>Bacillati</taxon>
        <taxon>Chloroflexota</taxon>
        <taxon>Chloroflexia</taxon>
        <taxon>Chloroflexales</taxon>
        <taxon>Roseiflexineae</taxon>
        <taxon>Roseiflexaceae</taxon>
        <taxon>Roseiflexus</taxon>
    </lineage>
</organism>
<accession>A7NKB4</accession>
<reference key="1">
    <citation type="submission" date="2007-08" db="EMBL/GenBank/DDBJ databases">
        <title>Complete sequence of Roseiflexus castenholzii DSM 13941.</title>
        <authorList>
            <consortium name="US DOE Joint Genome Institute"/>
            <person name="Copeland A."/>
            <person name="Lucas S."/>
            <person name="Lapidus A."/>
            <person name="Barry K."/>
            <person name="Glavina del Rio T."/>
            <person name="Dalin E."/>
            <person name="Tice H."/>
            <person name="Pitluck S."/>
            <person name="Thompson L.S."/>
            <person name="Brettin T."/>
            <person name="Bruce D."/>
            <person name="Detter J.C."/>
            <person name="Han C."/>
            <person name="Tapia R."/>
            <person name="Schmutz J."/>
            <person name="Larimer F."/>
            <person name="Land M."/>
            <person name="Hauser L."/>
            <person name="Kyrpides N."/>
            <person name="Mikhailova N."/>
            <person name="Bryant D.A."/>
            <person name="Hanada S."/>
            <person name="Tsukatani Y."/>
            <person name="Richardson P."/>
        </authorList>
    </citation>
    <scope>NUCLEOTIDE SEQUENCE [LARGE SCALE GENOMIC DNA]</scope>
    <source>
        <strain>DSM 13941 / HLO8</strain>
    </source>
</reference>
<dbReference type="EC" id="6.3.2.6" evidence="1"/>
<dbReference type="EMBL" id="CP000804">
    <property type="protein sequence ID" value="ABU57934.1"/>
    <property type="molecule type" value="Genomic_DNA"/>
</dbReference>
<dbReference type="RefSeq" id="WP_012120359.1">
    <property type="nucleotide sequence ID" value="NC_009767.1"/>
</dbReference>
<dbReference type="SMR" id="A7NKB4"/>
<dbReference type="STRING" id="383372.Rcas_1843"/>
<dbReference type="KEGG" id="rca:Rcas_1843"/>
<dbReference type="eggNOG" id="COG0152">
    <property type="taxonomic scope" value="Bacteria"/>
</dbReference>
<dbReference type="HOGENOM" id="CLU_061495_1_1_0"/>
<dbReference type="OrthoDB" id="9801549at2"/>
<dbReference type="UniPathway" id="UPA00074">
    <property type="reaction ID" value="UER00131"/>
</dbReference>
<dbReference type="Proteomes" id="UP000000263">
    <property type="component" value="Chromosome"/>
</dbReference>
<dbReference type="GO" id="GO:0005524">
    <property type="term" value="F:ATP binding"/>
    <property type="evidence" value="ECO:0007669"/>
    <property type="project" value="UniProtKB-KW"/>
</dbReference>
<dbReference type="GO" id="GO:0004639">
    <property type="term" value="F:phosphoribosylaminoimidazolesuccinocarboxamide synthase activity"/>
    <property type="evidence" value="ECO:0007669"/>
    <property type="project" value="UniProtKB-UniRule"/>
</dbReference>
<dbReference type="GO" id="GO:0006189">
    <property type="term" value="P:'de novo' IMP biosynthetic process"/>
    <property type="evidence" value="ECO:0007669"/>
    <property type="project" value="UniProtKB-UniRule"/>
</dbReference>
<dbReference type="CDD" id="cd01416">
    <property type="entry name" value="SAICAR_synt_Ade5"/>
    <property type="match status" value="1"/>
</dbReference>
<dbReference type="FunFam" id="3.30.470.20:FF:000020">
    <property type="entry name" value="Probable multifunctional protein ADE2"/>
    <property type="match status" value="1"/>
</dbReference>
<dbReference type="Gene3D" id="3.30.470.20">
    <property type="entry name" value="ATP-grasp fold, B domain"/>
    <property type="match status" value="1"/>
</dbReference>
<dbReference type="Gene3D" id="3.30.200.20">
    <property type="entry name" value="Phosphorylase Kinase, domain 1"/>
    <property type="match status" value="1"/>
</dbReference>
<dbReference type="HAMAP" id="MF_00137">
    <property type="entry name" value="SAICAR_synth"/>
    <property type="match status" value="1"/>
</dbReference>
<dbReference type="InterPro" id="IPR028923">
    <property type="entry name" value="SAICAR_synt/ADE2_N"/>
</dbReference>
<dbReference type="InterPro" id="IPR050089">
    <property type="entry name" value="SAICAR_synthetase"/>
</dbReference>
<dbReference type="InterPro" id="IPR018236">
    <property type="entry name" value="SAICAR_synthetase_CS"/>
</dbReference>
<dbReference type="PANTHER" id="PTHR43599">
    <property type="entry name" value="MULTIFUNCTIONAL PROTEIN ADE2"/>
    <property type="match status" value="1"/>
</dbReference>
<dbReference type="PANTHER" id="PTHR43599:SF3">
    <property type="entry name" value="SI:DKEY-6E2.2"/>
    <property type="match status" value="1"/>
</dbReference>
<dbReference type="Pfam" id="PF01259">
    <property type="entry name" value="SAICAR_synt"/>
    <property type="match status" value="1"/>
</dbReference>
<dbReference type="SUPFAM" id="SSF56104">
    <property type="entry name" value="SAICAR synthase-like"/>
    <property type="match status" value="1"/>
</dbReference>
<dbReference type="PROSITE" id="PS01058">
    <property type="entry name" value="SAICAR_SYNTHETASE_2"/>
    <property type="match status" value="1"/>
</dbReference>
<name>PUR7_ROSCS</name>
<protein>
    <recommendedName>
        <fullName evidence="1">Phosphoribosylaminoimidazole-succinocarboxamide synthase</fullName>
        <ecNumber evidence="1">6.3.2.6</ecNumber>
    </recommendedName>
    <alternativeName>
        <fullName evidence="1">SAICAR synthetase</fullName>
    </alternativeName>
</protein>
<evidence type="ECO:0000255" key="1">
    <source>
        <dbReference type="HAMAP-Rule" id="MF_00137"/>
    </source>
</evidence>
<gene>
    <name evidence="1" type="primary">purC</name>
    <name type="ordered locus">Rcas_1843</name>
</gene>